<name>YBJQ_ESCF3</name>
<accession>B7LN30</accession>
<sequence>MQFSTTPTLEGQTIVEYCGVVTGEAILGANIFRDFFAGIRDIVGGRSGAYEKELRKAREIAFEELGDQARALGADAVVGIDIDYETVGQNGSMLMVSVSGTAVKTRR</sequence>
<feature type="chain" id="PRO_1000119998" description="UPF0145 protein YbjQ">
    <location>
        <begin position="1"/>
        <end position="107"/>
    </location>
</feature>
<evidence type="ECO:0000255" key="1">
    <source>
        <dbReference type="HAMAP-Rule" id="MF_00338"/>
    </source>
</evidence>
<reference key="1">
    <citation type="journal article" date="2009" name="PLoS Genet.">
        <title>Organised genome dynamics in the Escherichia coli species results in highly diverse adaptive paths.</title>
        <authorList>
            <person name="Touchon M."/>
            <person name="Hoede C."/>
            <person name="Tenaillon O."/>
            <person name="Barbe V."/>
            <person name="Baeriswyl S."/>
            <person name="Bidet P."/>
            <person name="Bingen E."/>
            <person name="Bonacorsi S."/>
            <person name="Bouchier C."/>
            <person name="Bouvet O."/>
            <person name="Calteau A."/>
            <person name="Chiapello H."/>
            <person name="Clermont O."/>
            <person name="Cruveiller S."/>
            <person name="Danchin A."/>
            <person name="Diard M."/>
            <person name="Dossat C."/>
            <person name="Karoui M.E."/>
            <person name="Frapy E."/>
            <person name="Garry L."/>
            <person name="Ghigo J.M."/>
            <person name="Gilles A.M."/>
            <person name="Johnson J."/>
            <person name="Le Bouguenec C."/>
            <person name="Lescat M."/>
            <person name="Mangenot S."/>
            <person name="Martinez-Jehanne V."/>
            <person name="Matic I."/>
            <person name="Nassif X."/>
            <person name="Oztas S."/>
            <person name="Petit M.A."/>
            <person name="Pichon C."/>
            <person name="Rouy Z."/>
            <person name="Ruf C.S."/>
            <person name="Schneider D."/>
            <person name="Tourret J."/>
            <person name="Vacherie B."/>
            <person name="Vallenet D."/>
            <person name="Medigue C."/>
            <person name="Rocha E.P.C."/>
            <person name="Denamur E."/>
        </authorList>
    </citation>
    <scope>NUCLEOTIDE SEQUENCE [LARGE SCALE GENOMIC DNA]</scope>
    <source>
        <strain>ATCC 35469 / DSM 13698 / BCRC 15582 / CCUG 18766 / IAM 14443 / JCM 21226 / LMG 7866 / NBRC 102419 / NCTC 12128 / CDC 0568-73</strain>
    </source>
</reference>
<dbReference type="EMBL" id="CU928158">
    <property type="protein sequence ID" value="CAQ88541.1"/>
    <property type="molecule type" value="Genomic_DNA"/>
</dbReference>
<dbReference type="RefSeq" id="WP_001160731.1">
    <property type="nucleotide sequence ID" value="NC_011740.1"/>
</dbReference>
<dbReference type="SMR" id="B7LN30"/>
<dbReference type="KEGG" id="efe:EFER_1009"/>
<dbReference type="HOGENOM" id="CLU_117144_3_0_6"/>
<dbReference type="OrthoDB" id="9796448at2"/>
<dbReference type="Proteomes" id="UP000000745">
    <property type="component" value="Chromosome"/>
</dbReference>
<dbReference type="Gene3D" id="3.30.110.70">
    <property type="entry name" value="Hypothetical protein apc22750. Chain B"/>
    <property type="match status" value="1"/>
</dbReference>
<dbReference type="HAMAP" id="MF_00338">
    <property type="entry name" value="UPF0145"/>
    <property type="match status" value="1"/>
</dbReference>
<dbReference type="InterPro" id="IPR035439">
    <property type="entry name" value="UPF0145_dom_sf"/>
</dbReference>
<dbReference type="InterPro" id="IPR002765">
    <property type="entry name" value="UPF0145_YbjQ-like"/>
</dbReference>
<dbReference type="NCBIfam" id="NF002776">
    <property type="entry name" value="PRK02877.1"/>
    <property type="match status" value="1"/>
</dbReference>
<dbReference type="PANTHER" id="PTHR34068">
    <property type="entry name" value="UPF0145 PROTEIN YBJQ"/>
    <property type="match status" value="1"/>
</dbReference>
<dbReference type="PANTHER" id="PTHR34068:SF1">
    <property type="entry name" value="UPF0145 PROTEIN YBJQ"/>
    <property type="match status" value="1"/>
</dbReference>
<dbReference type="Pfam" id="PF01906">
    <property type="entry name" value="YbjQ_1"/>
    <property type="match status" value="1"/>
</dbReference>
<dbReference type="SUPFAM" id="SSF117782">
    <property type="entry name" value="YbjQ-like"/>
    <property type="match status" value="1"/>
</dbReference>
<protein>
    <recommendedName>
        <fullName evidence="1">UPF0145 protein YbjQ</fullName>
    </recommendedName>
</protein>
<proteinExistence type="inferred from homology"/>
<gene>
    <name evidence="1" type="primary">ybjQ</name>
    <name type="ordered locus">EFER_1009</name>
</gene>
<organism>
    <name type="scientific">Escherichia fergusonii (strain ATCC 35469 / DSM 13698 / CCUG 18766 / IAM 14443 / JCM 21226 / LMG 7866 / NBRC 102419 / NCTC 12128 / CDC 0568-73)</name>
    <dbReference type="NCBI Taxonomy" id="585054"/>
    <lineage>
        <taxon>Bacteria</taxon>
        <taxon>Pseudomonadati</taxon>
        <taxon>Pseudomonadota</taxon>
        <taxon>Gammaproteobacteria</taxon>
        <taxon>Enterobacterales</taxon>
        <taxon>Enterobacteriaceae</taxon>
        <taxon>Escherichia</taxon>
    </lineage>
</organism>
<comment type="similarity">
    <text evidence="1">Belongs to the UPF0145 family.</text>
</comment>